<comment type="function">
    <text evidence="1">Transfers the 4'-phosphopantetheine moiety from coenzyme A to a Ser of acyl-carrier-protein.</text>
</comment>
<comment type="catalytic activity">
    <reaction evidence="1">
        <text>apo-[ACP] + CoA = holo-[ACP] + adenosine 3',5'-bisphosphate + H(+)</text>
        <dbReference type="Rhea" id="RHEA:12068"/>
        <dbReference type="Rhea" id="RHEA-COMP:9685"/>
        <dbReference type="Rhea" id="RHEA-COMP:9690"/>
        <dbReference type="ChEBI" id="CHEBI:15378"/>
        <dbReference type="ChEBI" id="CHEBI:29999"/>
        <dbReference type="ChEBI" id="CHEBI:57287"/>
        <dbReference type="ChEBI" id="CHEBI:58343"/>
        <dbReference type="ChEBI" id="CHEBI:64479"/>
        <dbReference type="EC" id="2.7.8.7"/>
    </reaction>
</comment>
<comment type="cofactor">
    <cofactor evidence="1">
        <name>Mg(2+)</name>
        <dbReference type="ChEBI" id="CHEBI:18420"/>
    </cofactor>
</comment>
<comment type="subcellular location">
    <subcellularLocation>
        <location evidence="1">Cytoplasm</location>
    </subcellularLocation>
</comment>
<comment type="similarity">
    <text evidence="1">Belongs to the P-Pant transferase superfamily. AcpS family.</text>
</comment>
<feature type="chain" id="PRO_1000008377" description="Holo-[acyl-carrier-protein] synthase">
    <location>
        <begin position="1"/>
        <end position="134"/>
    </location>
</feature>
<feature type="binding site" evidence="1">
    <location>
        <position position="8"/>
    </location>
    <ligand>
        <name>Mg(2+)</name>
        <dbReference type="ChEBI" id="CHEBI:18420"/>
    </ligand>
</feature>
<feature type="binding site" evidence="1">
    <location>
        <position position="58"/>
    </location>
    <ligand>
        <name>Mg(2+)</name>
        <dbReference type="ChEBI" id="CHEBI:18420"/>
    </ligand>
</feature>
<accession>A5FVX4</accession>
<organism>
    <name type="scientific">Acidiphilium cryptum (strain JF-5)</name>
    <dbReference type="NCBI Taxonomy" id="349163"/>
    <lineage>
        <taxon>Bacteria</taxon>
        <taxon>Pseudomonadati</taxon>
        <taxon>Pseudomonadota</taxon>
        <taxon>Alphaproteobacteria</taxon>
        <taxon>Acetobacterales</taxon>
        <taxon>Acidocellaceae</taxon>
        <taxon>Acidiphilium</taxon>
    </lineage>
</organism>
<evidence type="ECO:0000255" key="1">
    <source>
        <dbReference type="HAMAP-Rule" id="MF_00101"/>
    </source>
</evidence>
<reference key="1">
    <citation type="submission" date="2007-05" db="EMBL/GenBank/DDBJ databases">
        <title>Complete sequence of chromosome of Acidiphilium cryptum JF-5.</title>
        <authorList>
            <consortium name="US DOE Joint Genome Institute"/>
            <person name="Copeland A."/>
            <person name="Lucas S."/>
            <person name="Lapidus A."/>
            <person name="Barry K."/>
            <person name="Detter J.C."/>
            <person name="Glavina del Rio T."/>
            <person name="Hammon N."/>
            <person name="Israni S."/>
            <person name="Dalin E."/>
            <person name="Tice H."/>
            <person name="Pitluck S."/>
            <person name="Sims D."/>
            <person name="Brettin T."/>
            <person name="Bruce D."/>
            <person name="Han C."/>
            <person name="Schmutz J."/>
            <person name="Larimer F."/>
            <person name="Land M."/>
            <person name="Hauser L."/>
            <person name="Kyrpides N."/>
            <person name="Kim E."/>
            <person name="Magnuson T."/>
            <person name="Richardson P."/>
        </authorList>
    </citation>
    <scope>NUCLEOTIDE SEQUENCE [LARGE SCALE GENOMIC DNA]</scope>
    <source>
        <strain>JF-5</strain>
    </source>
</reference>
<protein>
    <recommendedName>
        <fullName evidence="1">Holo-[acyl-carrier-protein] synthase</fullName>
        <shortName evidence="1">Holo-ACP synthase</shortName>
        <ecNumber evidence="1">2.7.8.7</ecNumber>
    </recommendedName>
    <alternativeName>
        <fullName evidence="1">4'-phosphopantetheinyl transferase AcpS</fullName>
    </alternativeName>
</protein>
<dbReference type="EC" id="2.7.8.7" evidence="1"/>
<dbReference type="EMBL" id="CP000697">
    <property type="protein sequence ID" value="ABQ29756.1"/>
    <property type="molecule type" value="Genomic_DNA"/>
</dbReference>
<dbReference type="RefSeq" id="WP_007421787.1">
    <property type="nucleotide sequence ID" value="NC_009484.1"/>
</dbReference>
<dbReference type="SMR" id="A5FVX4"/>
<dbReference type="STRING" id="349163.Acry_0532"/>
<dbReference type="KEGG" id="acr:Acry_0532"/>
<dbReference type="eggNOG" id="COG0736">
    <property type="taxonomic scope" value="Bacteria"/>
</dbReference>
<dbReference type="HOGENOM" id="CLU_089696_0_2_5"/>
<dbReference type="Proteomes" id="UP000000245">
    <property type="component" value="Chromosome"/>
</dbReference>
<dbReference type="GO" id="GO:0005737">
    <property type="term" value="C:cytoplasm"/>
    <property type="evidence" value="ECO:0007669"/>
    <property type="project" value="UniProtKB-SubCell"/>
</dbReference>
<dbReference type="GO" id="GO:0008897">
    <property type="term" value="F:holo-[acyl-carrier-protein] synthase activity"/>
    <property type="evidence" value="ECO:0007669"/>
    <property type="project" value="UniProtKB-UniRule"/>
</dbReference>
<dbReference type="GO" id="GO:0000287">
    <property type="term" value="F:magnesium ion binding"/>
    <property type="evidence" value="ECO:0007669"/>
    <property type="project" value="UniProtKB-UniRule"/>
</dbReference>
<dbReference type="GO" id="GO:0006633">
    <property type="term" value="P:fatty acid biosynthetic process"/>
    <property type="evidence" value="ECO:0007669"/>
    <property type="project" value="UniProtKB-UniRule"/>
</dbReference>
<dbReference type="Gene3D" id="3.90.470.20">
    <property type="entry name" value="4'-phosphopantetheinyl transferase domain"/>
    <property type="match status" value="1"/>
</dbReference>
<dbReference type="HAMAP" id="MF_00101">
    <property type="entry name" value="AcpS"/>
    <property type="match status" value="1"/>
</dbReference>
<dbReference type="InterPro" id="IPR008278">
    <property type="entry name" value="4-PPantetheinyl_Trfase_dom"/>
</dbReference>
<dbReference type="InterPro" id="IPR037143">
    <property type="entry name" value="4-PPantetheinyl_Trfase_dom_sf"/>
</dbReference>
<dbReference type="InterPro" id="IPR002582">
    <property type="entry name" value="ACPS"/>
</dbReference>
<dbReference type="InterPro" id="IPR004568">
    <property type="entry name" value="Ppantetheine-prot_Trfase_dom"/>
</dbReference>
<dbReference type="NCBIfam" id="TIGR00516">
    <property type="entry name" value="acpS"/>
    <property type="match status" value="1"/>
</dbReference>
<dbReference type="NCBIfam" id="TIGR00556">
    <property type="entry name" value="pantethn_trn"/>
    <property type="match status" value="1"/>
</dbReference>
<dbReference type="Pfam" id="PF01648">
    <property type="entry name" value="ACPS"/>
    <property type="match status" value="1"/>
</dbReference>
<dbReference type="SUPFAM" id="SSF56214">
    <property type="entry name" value="4'-phosphopantetheinyl transferase"/>
    <property type="match status" value="1"/>
</dbReference>
<name>ACPS_ACICJ</name>
<keyword id="KW-0963">Cytoplasm</keyword>
<keyword id="KW-0275">Fatty acid biosynthesis</keyword>
<keyword id="KW-0276">Fatty acid metabolism</keyword>
<keyword id="KW-0444">Lipid biosynthesis</keyword>
<keyword id="KW-0443">Lipid metabolism</keyword>
<keyword id="KW-0460">Magnesium</keyword>
<keyword id="KW-0479">Metal-binding</keyword>
<keyword id="KW-1185">Reference proteome</keyword>
<keyword id="KW-0808">Transferase</keyword>
<sequence>MIIGIGSDLCDIRRVERTLERFGERFIQRVFTETERRRAARRPAQFAATLAKRFAAKEACAKALGTGFRRGVFMSDLGVVNLPSGQPTLALTGGAAERLAALTPPGRSAFVHLSLTDEYPYAYAHVIIEARDGA</sequence>
<proteinExistence type="inferred from homology"/>
<gene>
    <name evidence="1" type="primary">acpS</name>
    <name type="ordered locus">Acry_0532</name>
</gene>